<comment type="subcellular location">
    <subcellularLocation>
        <location evidence="2">Cell outer membrane</location>
        <topology evidence="2">Lipid-anchor</topology>
    </subcellularLocation>
</comment>
<comment type="similarity">
    <text evidence="2">Belongs to the rickettsiale 17 kDa surface antigen family.</text>
</comment>
<keyword id="KW-0998">Cell outer membrane</keyword>
<keyword id="KW-0449">Lipoprotein</keyword>
<keyword id="KW-0472">Membrane</keyword>
<keyword id="KW-0564">Palmitate</keyword>
<keyword id="KW-0732">Signal</keyword>
<protein>
    <recommendedName>
        <fullName>17 kDa surface antigen</fullName>
    </recommendedName>
</protein>
<reference key="1">
    <citation type="submission" date="1994-08" db="EMBL/GenBank/DDBJ databases">
        <title>Rickettsia amblyommii, sp. nov., isolated from the Lone Star tick, Amblyomma americanum (Ixodidae).</title>
        <authorList>
            <person name="Stothard D.R."/>
            <person name="Ralph D.A."/>
            <person name="Clark J.B."/>
            <person name="Fuerst P.A."/>
            <person name="Pretzman C."/>
        </authorList>
    </citation>
    <scope>NUCLEOTIDE SEQUENCE [GENOMIC DNA]</scope>
</reference>
<accession>P50931</accession>
<name>17KD_RICRH</name>
<sequence>MKLLSKIMIIALAASMLQACNGPGGMNKQGTGTLLGGAGGALLGSQFGKGKGQLVGVGVGALLGAVLGGQIGAGMDEQDRRLAELTSQRALETAPSGSNVEWRNPDNGNYGYITPNKTYRNSTGQYCREYTQTVVIGGKQQKAYGNACLQPDGQ</sequence>
<dbReference type="EMBL" id="U11020">
    <property type="protein sequence ID" value="AAB07706.1"/>
    <property type="molecule type" value="Genomic_DNA"/>
</dbReference>
<dbReference type="GO" id="GO:0009279">
    <property type="term" value="C:cell outer membrane"/>
    <property type="evidence" value="ECO:0007669"/>
    <property type="project" value="UniProtKB-SubCell"/>
</dbReference>
<dbReference type="InterPro" id="IPR032635">
    <property type="entry name" value="Anti_2"/>
</dbReference>
<dbReference type="InterPro" id="IPR008816">
    <property type="entry name" value="Gly_zipper_2TM_dom"/>
</dbReference>
<dbReference type="InterPro" id="IPR016364">
    <property type="entry name" value="Surface_antigen_Rickettsia"/>
</dbReference>
<dbReference type="Pfam" id="PF16998">
    <property type="entry name" value="17kDa_Anti_2"/>
    <property type="match status" value="1"/>
</dbReference>
<dbReference type="Pfam" id="PF05433">
    <property type="entry name" value="Rick_17kDa_Anti"/>
    <property type="match status" value="1"/>
</dbReference>
<dbReference type="PIRSF" id="PIRSF002721">
    <property type="entry name" value="Surface_antigen_Rickettsia"/>
    <property type="match status" value="1"/>
</dbReference>
<dbReference type="PROSITE" id="PS51257">
    <property type="entry name" value="PROKAR_LIPOPROTEIN"/>
    <property type="match status" value="1"/>
</dbReference>
<gene>
    <name type="primary">omp</name>
</gene>
<feature type="signal peptide" evidence="1">
    <location>
        <begin position="1"/>
        <end position="19"/>
    </location>
</feature>
<feature type="chain" id="PRO_0000018020" description="17 kDa surface antigen">
    <location>
        <begin position="20"/>
        <end position="154" status="greater than"/>
    </location>
</feature>
<feature type="lipid moiety-binding region" description="N-palmitoyl cysteine" evidence="2">
    <location>
        <position position="20"/>
    </location>
</feature>
<feature type="lipid moiety-binding region" description="S-diacylglycerol cysteine" evidence="2">
    <location>
        <position position="20"/>
    </location>
</feature>
<feature type="non-terminal residue">
    <location>
        <position position="154"/>
    </location>
</feature>
<organism>
    <name type="scientific">Rickettsia rhipicephali</name>
    <dbReference type="NCBI Taxonomy" id="33992"/>
    <lineage>
        <taxon>Bacteria</taxon>
        <taxon>Pseudomonadati</taxon>
        <taxon>Pseudomonadota</taxon>
        <taxon>Alphaproteobacteria</taxon>
        <taxon>Rickettsiales</taxon>
        <taxon>Rickettsiaceae</taxon>
        <taxon>Rickettsieae</taxon>
        <taxon>Rickettsia</taxon>
        <taxon>spotted fever group</taxon>
    </lineage>
</organism>
<evidence type="ECO:0000255" key="1">
    <source>
        <dbReference type="PROSITE-ProRule" id="PRU00303"/>
    </source>
</evidence>
<evidence type="ECO:0000305" key="2"/>
<proteinExistence type="inferred from homology"/>